<feature type="chain" id="PRO_0000069918" description="Neuropeptide Y receptor type 1">
    <location>
        <begin position="1"/>
        <end position="382"/>
    </location>
</feature>
<feature type="topological domain" description="Extracellular" evidence="2">
    <location>
        <begin position="1"/>
        <end position="33"/>
    </location>
</feature>
<feature type="transmembrane region" description="Helical; Name=1" evidence="2">
    <location>
        <begin position="34"/>
        <end position="54"/>
    </location>
</feature>
<feature type="topological domain" description="Cytoplasmic" evidence="2">
    <location>
        <begin position="55"/>
        <end position="75"/>
    </location>
</feature>
<feature type="transmembrane region" description="Helical; Name=2" evidence="2">
    <location>
        <begin position="76"/>
        <end position="96"/>
    </location>
</feature>
<feature type="topological domain" description="Extracellular" evidence="2">
    <location>
        <begin position="97"/>
        <end position="115"/>
    </location>
</feature>
<feature type="transmembrane region" description="Helical; Name=3" evidence="2">
    <location>
        <begin position="116"/>
        <end position="136"/>
    </location>
</feature>
<feature type="topological domain" description="Cytoplasmic" evidence="2">
    <location>
        <begin position="137"/>
        <end position="153"/>
    </location>
</feature>
<feature type="transmembrane region" description="Helical; Name=4" evidence="2">
    <location>
        <begin position="154"/>
        <end position="174"/>
    </location>
</feature>
<feature type="topological domain" description="Extracellular" evidence="2">
    <location>
        <begin position="175"/>
        <end position="210"/>
    </location>
</feature>
<feature type="transmembrane region" description="Helical; Name=5" evidence="2">
    <location>
        <begin position="211"/>
        <end position="231"/>
    </location>
</feature>
<feature type="topological domain" description="Cytoplasmic" evidence="2">
    <location>
        <begin position="232"/>
        <end position="259"/>
    </location>
</feature>
<feature type="transmembrane region" description="Helical; Name=6" evidence="2">
    <location>
        <begin position="260"/>
        <end position="280"/>
    </location>
</feature>
<feature type="topological domain" description="Extracellular" evidence="2">
    <location>
        <begin position="281"/>
        <end position="298"/>
    </location>
</feature>
<feature type="transmembrane region" description="Helical; Name=7" evidence="2">
    <location>
        <begin position="299"/>
        <end position="319"/>
    </location>
</feature>
<feature type="topological domain" description="Cytoplasmic" evidence="2">
    <location>
        <begin position="320"/>
        <end position="382"/>
    </location>
</feature>
<feature type="modified residue" description="Phosphoserine" evidence="1">
    <location>
        <position position="367"/>
    </location>
</feature>
<feature type="lipid moiety-binding region" description="S-palmitoyl cysteine" evidence="2">
    <location>
        <position position="337"/>
    </location>
</feature>
<feature type="glycosylation site" description="N-linked (GlcNAc...) asparagine" evidence="2">
    <location>
        <position position="2"/>
    </location>
</feature>
<feature type="glycosylation site" description="N-linked (GlcNAc...) asparagine" evidence="2">
    <location>
        <position position="11"/>
    </location>
</feature>
<feature type="glycosylation site" description="N-linked (GlcNAc...) asparagine" evidence="2">
    <location>
        <position position="17"/>
    </location>
</feature>
<feature type="glycosylation site" description="N-linked (GlcNAc...) asparagine" evidence="2">
    <location>
        <position position="185"/>
    </location>
</feature>
<feature type="disulfide bond" evidence="3">
    <location>
        <begin position="112"/>
        <end position="197"/>
    </location>
</feature>
<gene>
    <name type="primary">NPY1R</name>
</gene>
<accession>O02813</accession>
<reference key="1">
    <citation type="journal article" date="1998" name="Regul. Pept.">
        <title>Characterization and molecular cloning of vascular neuropeptide Y receptor subtypes in pig and dog.</title>
        <authorList>
            <person name="Malmstroem R.E."/>
            <person name="Hoekfelt T."/>
            <person name="Bjoerkman J.-A."/>
            <person name="Nihlen C."/>
            <person name="Bystroem M."/>
            <person name="Ekstrand A.J."/>
            <person name="Lundberg J.M."/>
        </authorList>
    </citation>
    <scope>NUCLEOTIDE SEQUENCE [MRNA]</scope>
</reference>
<keyword id="KW-1003">Cell membrane</keyword>
<keyword id="KW-1015">Disulfide bond</keyword>
<keyword id="KW-0297">G-protein coupled receptor</keyword>
<keyword id="KW-0325">Glycoprotein</keyword>
<keyword id="KW-0449">Lipoprotein</keyword>
<keyword id="KW-0472">Membrane</keyword>
<keyword id="KW-0564">Palmitate</keyword>
<keyword id="KW-0597">Phosphoprotein</keyword>
<keyword id="KW-0675">Receptor</keyword>
<keyword id="KW-1185">Reference proteome</keyword>
<keyword id="KW-0807">Transducer</keyword>
<keyword id="KW-0812">Transmembrane</keyword>
<keyword id="KW-1133">Transmembrane helix</keyword>
<name>NPY1R_CANLF</name>
<dbReference type="EMBL" id="AF005778">
    <property type="protein sequence ID" value="AAC08046.1"/>
    <property type="molecule type" value="mRNA"/>
</dbReference>
<dbReference type="RefSeq" id="NP_001002930.1">
    <property type="nucleotide sequence ID" value="NM_001002930.1"/>
</dbReference>
<dbReference type="RefSeq" id="XP_005628870.1">
    <property type="nucleotide sequence ID" value="XM_005628813.1"/>
</dbReference>
<dbReference type="RefSeq" id="XP_005628871.1">
    <property type="nucleotide sequence ID" value="XM_005628814.1"/>
</dbReference>
<dbReference type="RefSeq" id="XP_005628872.1">
    <property type="nucleotide sequence ID" value="XM_005628815.2"/>
</dbReference>
<dbReference type="RefSeq" id="XP_005628874.1">
    <property type="nucleotide sequence ID" value="XM_005628817.1"/>
</dbReference>
<dbReference type="RefSeq" id="XP_005628877.1">
    <property type="nucleotide sequence ID" value="XM_005628820.2"/>
</dbReference>
<dbReference type="RefSeq" id="XP_038543081.1">
    <property type="nucleotide sequence ID" value="XM_038687153.1"/>
</dbReference>
<dbReference type="RefSeq" id="XP_038543082.1">
    <property type="nucleotide sequence ID" value="XM_038687154.1"/>
</dbReference>
<dbReference type="RefSeq" id="XP_038543083.1">
    <property type="nucleotide sequence ID" value="XM_038687155.1"/>
</dbReference>
<dbReference type="RefSeq" id="XP_038543084.1">
    <property type="nucleotide sequence ID" value="XM_038687156.1"/>
</dbReference>
<dbReference type="RefSeq" id="XP_038543085.1">
    <property type="nucleotide sequence ID" value="XM_038687157.1"/>
</dbReference>
<dbReference type="RefSeq" id="XP_038543086.1">
    <property type="nucleotide sequence ID" value="XM_038687158.1"/>
</dbReference>
<dbReference type="RefSeq" id="XP_038543087.1">
    <property type="nucleotide sequence ID" value="XM_038687159.1"/>
</dbReference>
<dbReference type="SMR" id="O02813"/>
<dbReference type="FunCoup" id="O02813">
    <property type="interactions" value="184"/>
</dbReference>
<dbReference type="STRING" id="9615.ENSCAFP00000012917"/>
<dbReference type="GlyCosmos" id="O02813">
    <property type="glycosylation" value="4 sites, No reported glycans"/>
</dbReference>
<dbReference type="PaxDb" id="9612-ENSCAFP00000012917"/>
<dbReference type="Ensembl" id="ENSCAFT00000013961.5">
    <property type="protein sequence ID" value="ENSCAFP00000012917.3"/>
    <property type="gene ID" value="ENSCAFG00000008791.5"/>
</dbReference>
<dbReference type="Ensembl" id="ENSCAFT00030035362.1">
    <property type="protein sequence ID" value="ENSCAFP00030030844.1"/>
    <property type="gene ID" value="ENSCAFG00030019229.1"/>
</dbReference>
<dbReference type="Ensembl" id="ENSCAFT00040010410.1">
    <property type="protein sequence ID" value="ENSCAFP00040009036.1"/>
    <property type="gene ID" value="ENSCAFG00040005550.1"/>
</dbReference>
<dbReference type="Ensembl" id="ENSCAFT00845011414.1">
    <property type="protein sequence ID" value="ENSCAFP00845008915.1"/>
    <property type="gene ID" value="ENSCAFG00845006432.1"/>
</dbReference>
<dbReference type="GeneID" id="399518"/>
<dbReference type="KEGG" id="cfa:399518"/>
<dbReference type="CTD" id="4886"/>
<dbReference type="VEuPathDB" id="HostDB:ENSCAFG00845006432"/>
<dbReference type="VGNC" id="VGNC:43937">
    <property type="gene designation" value="NPY1R"/>
</dbReference>
<dbReference type="eggNOG" id="KOG3656">
    <property type="taxonomic scope" value="Eukaryota"/>
</dbReference>
<dbReference type="GeneTree" id="ENSGT00940000160268"/>
<dbReference type="HOGENOM" id="CLU_009579_6_1_1"/>
<dbReference type="InParanoid" id="O02813"/>
<dbReference type="OMA" id="QFFFHFC"/>
<dbReference type="OrthoDB" id="9046662at2759"/>
<dbReference type="TreeFam" id="TF315303"/>
<dbReference type="Reactome" id="R-CFA-375276">
    <property type="pathway name" value="Peptide ligand-binding receptors"/>
</dbReference>
<dbReference type="Reactome" id="R-CFA-418594">
    <property type="pathway name" value="G alpha (i) signalling events"/>
</dbReference>
<dbReference type="Proteomes" id="UP000002254">
    <property type="component" value="Chromosome 15"/>
</dbReference>
<dbReference type="Proteomes" id="UP000694429">
    <property type="component" value="Chromosome 15"/>
</dbReference>
<dbReference type="Proteomes" id="UP000694542">
    <property type="component" value="Chromosome 15"/>
</dbReference>
<dbReference type="Proteomes" id="UP000805418">
    <property type="component" value="Chromosome 15"/>
</dbReference>
<dbReference type="Bgee" id="ENSCAFG00000008791">
    <property type="expression patterns" value="Expressed in spleen and 47 other cell types or tissues"/>
</dbReference>
<dbReference type="GO" id="GO:0043005">
    <property type="term" value="C:neuron projection"/>
    <property type="evidence" value="ECO:0000318"/>
    <property type="project" value="GO_Central"/>
</dbReference>
<dbReference type="GO" id="GO:0005886">
    <property type="term" value="C:plasma membrane"/>
    <property type="evidence" value="ECO:0000318"/>
    <property type="project" value="GO_Central"/>
</dbReference>
<dbReference type="GO" id="GO:0042923">
    <property type="term" value="F:neuropeptide binding"/>
    <property type="evidence" value="ECO:0000318"/>
    <property type="project" value="GO_Central"/>
</dbReference>
<dbReference type="GO" id="GO:0008188">
    <property type="term" value="F:neuropeptide receptor activity"/>
    <property type="evidence" value="ECO:0000318"/>
    <property type="project" value="GO_Central"/>
</dbReference>
<dbReference type="GO" id="GO:0001602">
    <property type="term" value="F:pancreatic polypeptide receptor activity"/>
    <property type="evidence" value="ECO:0007669"/>
    <property type="project" value="Ensembl"/>
</dbReference>
<dbReference type="GO" id="GO:0001601">
    <property type="term" value="F:peptide YY receptor activity"/>
    <property type="evidence" value="ECO:0007669"/>
    <property type="project" value="Ensembl"/>
</dbReference>
<dbReference type="GO" id="GO:0007631">
    <property type="term" value="P:feeding behavior"/>
    <property type="evidence" value="ECO:0007669"/>
    <property type="project" value="Ensembl"/>
</dbReference>
<dbReference type="GO" id="GO:0006006">
    <property type="term" value="P:glucose metabolic process"/>
    <property type="evidence" value="ECO:0007669"/>
    <property type="project" value="Ensembl"/>
</dbReference>
<dbReference type="GO" id="GO:0007626">
    <property type="term" value="P:locomotory behavior"/>
    <property type="evidence" value="ECO:0007669"/>
    <property type="project" value="Ensembl"/>
</dbReference>
<dbReference type="GO" id="GO:0003151">
    <property type="term" value="P:outflow tract morphogenesis"/>
    <property type="evidence" value="ECO:0007669"/>
    <property type="project" value="Ensembl"/>
</dbReference>
<dbReference type="GO" id="GO:0008217">
    <property type="term" value="P:regulation of blood pressure"/>
    <property type="evidence" value="ECO:0007669"/>
    <property type="project" value="Ensembl"/>
</dbReference>
<dbReference type="GO" id="GO:0040014">
    <property type="term" value="P:regulation of multicellular organism growth"/>
    <property type="evidence" value="ECO:0007669"/>
    <property type="project" value="Ensembl"/>
</dbReference>
<dbReference type="GO" id="GO:0019233">
    <property type="term" value="P:sensory perception of pain"/>
    <property type="evidence" value="ECO:0007669"/>
    <property type="project" value="Ensembl"/>
</dbReference>
<dbReference type="CDD" id="cd15395">
    <property type="entry name" value="7tmA_NPY1R"/>
    <property type="match status" value="1"/>
</dbReference>
<dbReference type="FunFam" id="1.20.1070.10:FF:000062">
    <property type="entry name" value="Neuropeptide Y receptor type 1"/>
    <property type="match status" value="1"/>
</dbReference>
<dbReference type="Gene3D" id="1.20.1070.10">
    <property type="entry name" value="Rhodopsin 7-helix transmembrane proteins"/>
    <property type="match status" value="1"/>
</dbReference>
<dbReference type="InterPro" id="IPR000276">
    <property type="entry name" value="GPCR_Rhodpsn"/>
</dbReference>
<dbReference type="InterPro" id="IPR017452">
    <property type="entry name" value="GPCR_Rhodpsn_7TM"/>
</dbReference>
<dbReference type="InterPro" id="IPR000351">
    <property type="entry name" value="NPY1_rcpt"/>
</dbReference>
<dbReference type="InterPro" id="IPR000611">
    <property type="entry name" value="NPY_rcpt"/>
</dbReference>
<dbReference type="PANTHER" id="PTHR24235">
    <property type="entry name" value="NEUROPEPTIDE Y RECEPTOR"/>
    <property type="match status" value="1"/>
</dbReference>
<dbReference type="PANTHER" id="PTHR24235:SF24">
    <property type="entry name" value="NEUROPEPTIDE Y RECEPTOR TYPE 1"/>
    <property type="match status" value="1"/>
</dbReference>
<dbReference type="Pfam" id="PF00001">
    <property type="entry name" value="7tm_1"/>
    <property type="match status" value="1"/>
</dbReference>
<dbReference type="PRINTS" id="PR00237">
    <property type="entry name" value="GPCRRHODOPSN"/>
</dbReference>
<dbReference type="PRINTS" id="PR01013">
    <property type="entry name" value="NRPEPTIDEY1R"/>
</dbReference>
<dbReference type="PRINTS" id="PR01012">
    <property type="entry name" value="NRPEPTIDEYR"/>
</dbReference>
<dbReference type="SUPFAM" id="SSF81321">
    <property type="entry name" value="Family A G protein-coupled receptor-like"/>
    <property type="match status" value="1"/>
</dbReference>
<dbReference type="PROSITE" id="PS00237">
    <property type="entry name" value="G_PROTEIN_RECEP_F1_1"/>
    <property type="match status" value="1"/>
</dbReference>
<dbReference type="PROSITE" id="PS50262">
    <property type="entry name" value="G_PROTEIN_RECEP_F1_2"/>
    <property type="match status" value="1"/>
</dbReference>
<organism>
    <name type="scientific">Canis lupus familiaris</name>
    <name type="common">Dog</name>
    <name type="synonym">Canis familiaris</name>
    <dbReference type="NCBI Taxonomy" id="9615"/>
    <lineage>
        <taxon>Eukaryota</taxon>
        <taxon>Metazoa</taxon>
        <taxon>Chordata</taxon>
        <taxon>Craniata</taxon>
        <taxon>Vertebrata</taxon>
        <taxon>Euteleostomi</taxon>
        <taxon>Mammalia</taxon>
        <taxon>Eutheria</taxon>
        <taxon>Laurasiatheria</taxon>
        <taxon>Carnivora</taxon>
        <taxon>Caniformia</taxon>
        <taxon>Canidae</taxon>
        <taxon>Canis</taxon>
    </lineage>
</organism>
<protein>
    <recommendedName>
        <fullName>Neuropeptide Y receptor type 1</fullName>
        <shortName>NPY1-R</shortName>
    </recommendedName>
</protein>
<evidence type="ECO:0000250" key="1">
    <source>
        <dbReference type="UniProtKB" id="P21555"/>
    </source>
</evidence>
<evidence type="ECO:0000255" key="2"/>
<evidence type="ECO:0000255" key="3">
    <source>
        <dbReference type="PROSITE-ProRule" id="PRU00521"/>
    </source>
</evidence>
<comment type="function">
    <text>Receptor for neuropeptide Y and peptide YY.</text>
</comment>
<comment type="subcellular location">
    <subcellularLocation>
        <location>Cell membrane</location>
        <topology>Multi-pass membrane protein</topology>
    </subcellularLocation>
</comment>
<comment type="similarity">
    <text evidence="3">Belongs to the G-protein coupled receptor 1 family.</text>
</comment>
<sequence length="382" mass="44245">MNSTSFSQVENHSIFCNFSENSQFLAFESDDCHLPLAMIFTLALAYGAVIILGVTGNLALIMIILKQKEMRNVTNILIVNLSFSDLLVAIMCLPFTFVYTLMDHWVFGEAMCKLNPFVQCVSITVSIFSLVLIAVERHQLIINPRGWRPNNRHAYVGIAVIWVLAVVSSLPFLIYQVLTDEPFQNVTLDAFKDKYVCFDKFPSDSHRLSYTTLLLMLQYFGPLCFIFICYFKIYIRLKRRNNMMDKMRDNKYRSSETKRINIMLLSIVVAFAVCWLPLTIFNTVFDWNHQIIATCNHNLLFLLCHLTAMISTCVNPIFYGFLNKNFQRDLQFFFNFCDFRSRDDDYETIAMSTMHTDVSKTSLKQASPVAFKKINNDDNEKI</sequence>
<proteinExistence type="evidence at transcript level"/>